<comment type="function">
    <text evidence="9 13 15">Receptor for the cytotoxic ligand TNFSF10/TRAIL (PubMed:26457518, PubMed:38532423). The adapter molecule FADD recruits caspase-8 to the activated receptor. The resulting death-inducing signaling complex (DISC) performs caspase-8 proteolytic activation which initiates the subsequent cascade of caspases (aspartate-specific cysteine proteases) mediating apoptosis (PubMed:19090789). Promotes the activation of NF-kappa-B (PubMed:9430227).</text>
</comment>
<comment type="subunit">
    <text evidence="7 8 9 10 12 13">Monomer (PubMed:26457518). Homooligomers and heterooligomers with TNFRSF10B (PubMed:19090789). Three TNFRSF10A molecules interact with the TNFSF10 homotrimer (PubMed:26457518). Can interact with TRADD and RIPK1. Interacts with ARAP1. In the absence of stimulation, interacts with BIRC2, DDX3X and GSK3B. The interaction with BIRC2 and DDX3X is further enhanced upon receptor stimulation and accompanied by DDX3X and BIRC2 cleavage (PubMed:18846110). Interacts with ZDHHC3 (PubMed:22240897). Interacts with PTPN6; this interaction enables the inhibition of T-cell receptor signaling via LCK (PubMed:38532423).</text>
</comment>
<comment type="subunit">
    <text evidence="11">(Microbial infection) Interacts with HCMV protein UL141; this interaction prevents TNFRSF10A cell surface expression.</text>
</comment>
<comment type="interaction">
    <interactant intactId="EBI-518861">
        <id>O00220</id>
    </interactant>
    <interactant intactId="EBI-710003">
        <id>Q96P48</id>
        <label>ARAP1</label>
    </interactant>
    <organismsDiffer>false</organismsDiffer>
    <experiments>4</experiments>
</comment>
<comment type="interaction">
    <interactant intactId="EBI-518861">
        <id>O00220</id>
    </interactant>
    <interactant intactId="EBI-78060">
        <id>Q14790</id>
        <label>CASP8</label>
    </interactant>
    <organismsDiffer>false</organismsDiffer>
    <experiments>11</experiments>
</comment>
<comment type="interaction">
    <interactant intactId="EBI-518861">
        <id>O00220</id>
    </interactant>
    <interactant intactId="EBI-354956">
        <id>Q08380</id>
        <label>LGALS3BP</label>
    </interactant>
    <organismsDiffer>false</organismsDiffer>
    <experiments>2</experiments>
</comment>
<comment type="interaction">
    <interactant intactId="EBI-518861">
        <id>O00220</id>
    </interactant>
    <interactant intactId="EBI-495373">
        <id>P50591</id>
        <label>TNFSF10</label>
    </interactant>
    <organismsDiffer>false</organismsDiffer>
    <experiments>4</experiments>
</comment>
<comment type="subcellular location">
    <subcellularLocation>
        <location evidence="10">Cell membrane</location>
        <topology evidence="1">Single-pass type I membrane protein</topology>
    </subcellularLocation>
    <subcellularLocation>
        <location evidence="9 10">Membrane raft</location>
    </subcellularLocation>
    <subcellularLocation>
        <location evidence="10">Cytoplasm</location>
        <location evidence="10">Cytosol</location>
    </subcellularLocation>
    <text evidence="10">Palmitoylation is required for association with membranes.</text>
</comment>
<comment type="tissue specificity">
    <text>Widely expressed. High levels are found in spleen, peripheral blood leukocytes, small intestine and thymus, but also in K-562 erythroleukemia cells, MCF-7 breast carcinoma cells and activated T-cells.</text>
</comment>
<comment type="PTM">
    <text evidence="9 19">Palmitoylated (PubMed:19090789). Palmitoylation of TNFRSF10A is required for its association with lipid rafts, oligomerization and function in TRAIL-induced cell death (PubMed:19090789). Palmitoylated by ZDHHC3 (Probable).</text>
</comment>
<gene>
    <name type="primary">TNFRSF10A</name>
    <name type="synonym">APO2</name>
    <name type="synonym">DR4</name>
    <name type="synonym">TRAILR1</name>
</gene>
<name>TR10A_HUMAN</name>
<sequence length="468" mass="50089">MAPPPARVHLGAFLAVTPNPGSAASGTEAAAATPSKVWGSSAGRIEPRGGGRGALPTSMGQHGPSARARAGRAPGPRPAREASPRLRVHKTFKFVVVGVLLQVVPSSAATIKLHDQSIGTQQWEHSPLGELCPPGSHRSEHPGACNRCTEGVGYTNASNNLFACLPCTACKSDEEERSPCTTTRNTACQCKPGTFRNDNSAEMCRKCSRGCPRGMVKVKDCTPWSDIECVHKESGNGHNIWVILVVTLVVPLLLVAVLIVCCCIGSGCGGDPKCMDRVCFWRLGLLRGPGAEDNAHNEILSNADSLSTFVSEQQMESQEPADLTGVTVQSPGEAQCLLGPAEAEGSQRRRLLVPANGADPTETLMLFFDKFANIVPFDSWDQLMRQLDLTKNEIDVVRAGTAGPGDALYAMLMKWVNKTGRNASIHTLLDALERMEERHAREKIQDLLVDSGKFIYLEDGTGSAVSLE</sequence>
<evidence type="ECO:0000255" key="1"/>
<evidence type="ECO:0000255" key="2">
    <source>
        <dbReference type="PROSITE-ProRule" id="PRU00064"/>
    </source>
</evidence>
<evidence type="ECO:0000255" key="3">
    <source>
        <dbReference type="PROSITE-ProRule" id="PRU00206"/>
    </source>
</evidence>
<evidence type="ECO:0000256" key="4">
    <source>
        <dbReference type="SAM" id="MobiDB-lite"/>
    </source>
</evidence>
<evidence type="ECO:0000269" key="5">
    <source>
    </source>
</evidence>
<evidence type="ECO:0000269" key="6">
    <source>
    </source>
</evidence>
<evidence type="ECO:0000269" key="7">
    <source>
    </source>
</evidence>
<evidence type="ECO:0000269" key="8">
    <source>
    </source>
</evidence>
<evidence type="ECO:0000269" key="9">
    <source>
    </source>
</evidence>
<evidence type="ECO:0000269" key="10">
    <source>
    </source>
</evidence>
<evidence type="ECO:0000269" key="11">
    <source>
    </source>
</evidence>
<evidence type="ECO:0000269" key="12">
    <source>
    </source>
</evidence>
<evidence type="ECO:0000269" key="13">
    <source>
    </source>
</evidence>
<evidence type="ECO:0000269" key="14">
    <source>
    </source>
</evidence>
<evidence type="ECO:0000269" key="15">
    <source>
    </source>
</evidence>
<evidence type="ECO:0000269" key="16">
    <source ref="2"/>
</evidence>
<evidence type="ECO:0000269" key="17">
    <source ref="4"/>
</evidence>
<evidence type="ECO:0000305" key="18"/>
<evidence type="ECO:0000305" key="19">
    <source>
    </source>
</evidence>
<evidence type="ECO:0007744" key="20">
    <source>
        <dbReference type="PDB" id="5CIR"/>
    </source>
</evidence>
<evidence type="ECO:0007744" key="21">
    <source>
    </source>
</evidence>
<evidence type="ECO:0007744" key="22">
    <source>
    </source>
</evidence>
<evidence type="ECO:0007744" key="23">
    <source>
    </source>
</evidence>
<evidence type="ECO:0007744" key="24">
    <source>
    </source>
</evidence>
<evidence type="ECO:0007829" key="25">
    <source>
        <dbReference type="PDB" id="5CIR"/>
    </source>
</evidence>
<protein>
    <recommendedName>
        <fullName>Tumor necrosis factor receptor superfamily member 10A</fullName>
    </recommendedName>
    <alternativeName>
        <fullName>Death receptor 4</fullName>
    </alternativeName>
    <alternativeName>
        <fullName>TNF-related apoptosis-inducing ligand receptor 1</fullName>
        <shortName>TRAIL receptor 1</shortName>
        <shortName>TRAIL-R1</shortName>
    </alternativeName>
    <cdAntigenName>CD261</cdAntigenName>
</protein>
<feature type="signal peptide" evidence="1">
    <location>
        <begin position="1"/>
        <end position="23"/>
    </location>
</feature>
<feature type="chain" id="PRO_0000034579" description="Tumor necrosis factor receptor superfamily member 10A">
    <location>
        <begin position="24"/>
        <end position="468"/>
    </location>
</feature>
<feature type="topological domain" description="Extracellular" evidence="1">
    <location>
        <begin position="24"/>
        <end position="239"/>
    </location>
</feature>
<feature type="transmembrane region" description="Helical" evidence="1">
    <location>
        <begin position="240"/>
        <end position="262"/>
    </location>
</feature>
<feature type="topological domain" description="Cytoplasmic" evidence="1">
    <location>
        <begin position="263"/>
        <end position="468"/>
    </location>
</feature>
<feature type="repeat" description="TNFR-Cys 1">
    <location>
        <begin position="107"/>
        <end position="145"/>
    </location>
</feature>
<feature type="repeat" description="TNFR-Cys 2">
    <location>
        <begin position="147"/>
        <end position="188"/>
    </location>
</feature>
<feature type="repeat" description="TNFR-Cys 3">
    <location>
        <begin position="189"/>
        <end position="229"/>
    </location>
</feature>
<feature type="domain" description="Death" evidence="2">
    <location>
        <begin position="365"/>
        <end position="448"/>
    </location>
</feature>
<feature type="region of interest" description="Disordered" evidence="4">
    <location>
        <begin position="17"/>
        <end position="82"/>
    </location>
</feature>
<feature type="compositionally biased region" description="Low complexity" evidence="4">
    <location>
        <begin position="20"/>
        <end position="34"/>
    </location>
</feature>
<feature type="compositionally biased region" description="Low complexity" evidence="4">
    <location>
        <begin position="63"/>
        <end position="74"/>
    </location>
</feature>
<feature type="modified residue" description="Omega-N-methylarginine" evidence="24">
    <location>
        <position position="52"/>
    </location>
</feature>
<feature type="modified residue" description="Phosphoserine" evidence="23">
    <location>
        <position position="424"/>
    </location>
</feature>
<feature type="modified residue" description="Phosphoserine" evidence="22">
    <location>
        <position position="463"/>
    </location>
</feature>
<feature type="modified residue" description="Phosphoserine" evidence="21 22">
    <location>
        <position position="466"/>
    </location>
</feature>
<feature type="glycosylation site" description="N-linked (GlcNAc...) asparagine" evidence="1">
    <location>
        <position position="156"/>
    </location>
</feature>
<feature type="disulfide bond" evidence="3 12 20">
    <location>
        <begin position="132"/>
        <end position="145"/>
    </location>
</feature>
<feature type="disulfide bond" evidence="3 12 20">
    <location>
        <begin position="148"/>
        <end position="164"/>
    </location>
</feature>
<feature type="disulfide bond" evidence="3 12 20">
    <location>
        <begin position="167"/>
        <end position="180"/>
    </location>
</feature>
<feature type="disulfide bond" evidence="3 12 20">
    <location>
        <begin position="170"/>
        <end position="188"/>
    </location>
</feature>
<feature type="disulfide bond" evidence="3 12 20">
    <location>
        <begin position="190"/>
        <end position="204"/>
    </location>
</feature>
<feature type="disulfide bond" evidence="3 12 20">
    <location>
        <begin position="207"/>
        <end position="221"/>
    </location>
</feature>
<feature type="disulfide bond" evidence="3 12 20">
    <location>
        <begin position="211"/>
        <end position="229"/>
    </location>
</feature>
<feature type="sequence variant" id="VAR_052349" description="In dbSNP:rs34737614.">
    <original>G</original>
    <variation>V</variation>
    <location>
        <position position="11"/>
    </location>
</feature>
<feature type="sequence variant" id="VAR_016149" description="In dbSNP:rs20577.">
    <original>T</original>
    <variation>I</variation>
    <location>
        <position position="33"/>
    </location>
</feature>
<feature type="sequence variant" id="VAR_052350" description="In dbSNP:rs11986840.">
    <original>P</original>
    <variation>R</variation>
    <location>
        <position position="105"/>
    </location>
</feature>
<feature type="sequence variant" id="VAR_016150" description="In dbSNP:rs17620." evidence="5 14">
    <original>H</original>
    <variation>R</variation>
    <location>
        <position position="141"/>
    </location>
</feature>
<feature type="sequence variant" id="VAR_016151" description="In dbSNP:rs20575." evidence="5 14">
    <original>R</original>
    <variation>T</variation>
    <location>
        <position position="209"/>
    </location>
</feature>
<feature type="sequence variant" id="VAR_016152" description="In dbSNP:rs20576.">
    <original>E</original>
    <variation>A</variation>
    <location>
        <position position="228"/>
    </location>
</feature>
<feature type="sequence variant" id="VAR_052351" description="In dbSNP:rs17088980.">
    <original>N</original>
    <variation>H</variation>
    <location>
        <position position="297"/>
    </location>
</feature>
<feature type="sequence variant" id="VAR_052352" description="In dbSNP:rs2230229." evidence="5 6 14 16 17">
    <original>R</original>
    <variation>K</variation>
    <location>
        <position position="441"/>
    </location>
</feature>
<feature type="mutagenesis site" description="No effect on palmitoylation. Loss of palmitoylation, decreased association with membranes, decreased oligomerization, decreased death-induced signaling complex assembly associated with decreased function in TRAIL-induced cell death; when associated with S-262 and S-263." evidence="9 10">
    <original>C</original>
    <variation>S</variation>
    <location>
        <position position="261"/>
    </location>
</feature>
<feature type="mutagenesis site" description="No effect on palmitoylation. Loss of palmitoylation, decreased association with membranes, decreased oligomerization, decreased death-induced signaling complex assembly associated with decreased function in TRAIL-induced cell death; when associated with S-261 and S-263." evidence="9">
    <original>C</original>
    <variation>S</variation>
    <location>
        <position position="262"/>
    </location>
</feature>
<feature type="mutagenesis site" description="No effect on palmitoylation. Loss of palmitoylation, decreased association with membranes, decreased oligomerization, decreased death-induced signaling complex assembly associated with decreased function in TRAIL-induced cell death; when associated with S-261 and S-262." evidence="9">
    <original>C</original>
    <variation>S</variation>
    <location>
        <position position="263"/>
    </location>
</feature>
<feature type="mutagenesis site" description="No effect on palmitoylation." evidence="9">
    <original>C</original>
    <variation>S</variation>
    <location>
        <position position="268"/>
    </location>
</feature>
<feature type="mutagenesis site" description="No effect on palmitoylation." evidence="9">
    <original>C</original>
    <variation>S</variation>
    <location>
        <position position="274"/>
    </location>
</feature>
<feature type="mutagenesis site" description="No effect on palmitoylation." evidence="9">
    <original>C</original>
    <variation>S</variation>
    <location>
        <position position="279"/>
    </location>
</feature>
<feature type="sequence conflict" description="In Ref. 3; BAF83988." evidence="18" ref="3">
    <original>W</original>
    <variation>C</variation>
    <location>
        <position position="281"/>
    </location>
</feature>
<feature type="strand" evidence="25">
    <location>
        <begin position="136"/>
        <end position="138"/>
    </location>
</feature>
<feature type="strand" evidence="25">
    <location>
        <begin position="145"/>
        <end position="147"/>
    </location>
</feature>
<feature type="turn" evidence="25">
    <location>
        <begin position="150"/>
        <end position="152"/>
    </location>
</feature>
<feature type="strand" evidence="25">
    <location>
        <begin position="157"/>
        <end position="159"/>
    </location>
</feature>
<feature type="strand" evidence="25">
    <location>
        <begin position="174"/>
        <end position="178"/>
    </location>
</feature>
<feature type="strand" evidence="25">
    <location>
        <begin position="187"/>
        <end position="190"/>
    </location>
</feature>
<feature type="strand" evidence="25">
    <location>
        <begin position="216"/>
        <end position="219"/>
    </location>
</feature>
<feature type="strand" evidence="25">
    <location>
        <begin position="228"/>
        <end position="230"/>
    </location>
</feature>
<dbReference type="EMBL" id="U90875">
    <property type="protein sequence ID" value="AAC51226.1"/>
    <property type="molecule type" value="mRNA"/>
</dbReference>
<dbReference type="EMBL" id="BT006906">
    <property type="protein sequence ID" value="AAP35552.1"/>
    <property type="molecule type" value="mRNA"/>
</dbReference>
<dbReference type="EMBL" id="AK291299">
    <property type="protein sequence ID" value="BAF83988.1"/>
    <property type="molecule type" value="mRNA"/>
</dbReference>
<dbReference type="EMBL" id="EF064713">
    <property type="protein sequence ID" value="ABK41896.1"/>
    <property type="molecule type" value="Genomic_DNA"/>
</dbReference>
<dbReference type="EMBL" id="AC100861">
    <property type="status" value="NOT_ANNOTATED_CDS"/>
    <property type="molecule type" value="Genomic_DNA"/>
</dbReference>
<dbReference type="EMBL" id="BC012866">
    <property type="protein sequence ID" value="AAH12866.1"/>
    <property type="molecule type" value="mRNA"/>
</dbReference>
<dbReference type="CCDS" id="CCDS6039.1"/>
<dbReference type="RefSeq" id="NP_003835.3">
    <property type="nucleotide sequence ID" value="NM_003844.3"/>
</dbReference>
<dbReference type="PDB" id="5CIR">
    <property type="method" value="X-ray"/>
    <property type="resolution" value="3.00 A"/>
    <property type="chains" value="E/F/G=125-232"/>
</dbReference>
<dbReference type="PDBsum" id="5CIR"/>
<dbReference type="SMR" id="O00220"/>
<dbReference type="BioGRID" id="114325">
    <property type="interactions" value="145"/>
</dbReference>
<dbReference type="FunCoup" id="O00220">
    <property type="interactions" value="869"/>
</dbReference>
<dbReference type="IntAct" id="O00220">
    <property type="interactions" value="113"/>
</dbReference>
<dbReference type="MINT" id="O00220"/>
<dbReference type="STRING" id="9606.ENSP00000221132"/>
<dbReference type="BindingDB" id="O00220"/>
<dbReference type="ChEMBL" id="CHEMBL3551"/>
<dbReference type="GuidetoPHARMACOLOGY" id="1879"/>
<dbReference type="GlyCosmos" id="O00220">
    <property type="glycosylation" value="3 sites, 2 glycans"/>
</dbReference>
<dbReference type="GlyGen" id="O00220">
    <property type="glycosylation" value="10 sites, 1 N-linked glycan (1 site), 3 O-linked glycans (5 sites)"/>
</dbReference>
<dbReference type="iPTMnet" id="O00220"/>
<dbReference type="PhosphoSitePlus" id="O00220"/>
<dbReference type="SwissPalm" id="O00220"/>
<dbReference type="BioMuta" id="TNFRSF10A"/>
<dbReference type="jPOST" id="O00220"/>
<dbReference type="MassIVE" id="O00220"/>
<dbReference type="PaxDb" id="9606-ENSP00000221132"/>
<dbReference type="PeptideAtlas" id="O00220"/>
<dbReference type="ProteomicsDB" id="47790"/>
<dbReference type="Pumba" id="O00220"/>
<dbReference type="ABCD" id="O00220">
    <property type="antibodies" value="12 sequenced antibodies"/>
</dbReference>
<dbReference type="Antibodypedia" id="9727">
    <property type="antibodies" value="1228 antibodies from 50 providers"/>
</dbReference>
<dbReference type="DNASU" id="8797"/>
<dbReference type="Ensembl" id="ENST00000221132.8">
    <property type="protein sequence ID" value="ENSP00000221132.3"/>
    <property type="gene ID" value="ENSG00000104689.10"/>
</dbReference>
<dbReference type="GeneID" id="8797"/>
<dbReference type="KEGG" id="hsa:8797"/>
<dbReference type="MANE-Select" id="ENST00000221132.8">
    <property type="protein sequence ID" value="ENSP00000221132.3"/>
    <property type="RefSeq nucleotide sequence ID" value="NM_003844.4"/>
    <property type="RefSeq protein sequence ID" value="NP_003835.3"/>
</dbReference>
<dbReference type="UCSC" id="uc003xda.4">
    <property type="organism name" value="human"/>
</dbReference>
<dbReference type="AGR" id="HGNC:11904"/>
<dbReference type="CTD" id="8797"/>
<dbReference type="DisGeNET" id="8797"/>
<dbReference type="GeneCards" id="TNFRSF10A"/>
<dbReference type="HGNC" id="HGNC:11904">
    <property type="gene designation" value="TNFRSF10A"/>
</dbReference>
<dbReference type="HPA" id="ENSG00000104689">
    <property type="expression patterns" value="Low tissue specificity"/>
</dbReference>
<dbReference type="MIM" id="603611">
    <property type="type" value="gene"/>
</dbReference>
<dbReference type="neXtProt" id="NX_O00220"/>
<dbReference type="OpenTargets" id="ENSG00000104689"/>
<dbReference type="PharmGKB" id="PA36597"/>
<dbReference type="VEuPathDB" id="HostDB:ENSG00000104689"/>
<dbReference type="eggNOG" id="ENOG502RBEC">
    <property type="taxonomic scope" value="Eukaryota"/>
</dbReference>
<dbReference type="GeneTree" id="ENSGT00940000162957"/>
<dbReference type="InParanoid" id="O00220"/>
<dbReference type="OMA" id="ENQQYPH"/>
<dbReference type="OrthoDB" id="9417953at2759"/>
<dbReference type="PAN-GO" id="O00220">
    <property type="GO annotations" value="4 GO annotations based on evolutionary models"/>
</dbReference>
<dbReference type="PhylomeDB" id="O00220"/>
<dbReference type="TreeFam" id="TF333916"/>
<dbReference type="PathwayCommons" id="O00220"/>
<dbReference type="Reactome" id="R-HSA-140534">
    <property type="pathway name" value="Caspase activation via Death Receptors in the presence of ligand"/>
</dbReference>
<dbReference type="Reactome" id="R-HSA-202733">
    <property type="pathway name" value="Cell surface interactions at the vascular wall"/>
</dbReference>
<dbReference type="Reactome" id="R-HSA-3371378">
    <property type="pathway name" value="Regulation by c-FLIP"/>
</dbReference>
<dbReference type="Reactome" id="R-HSA-5213460">
    <property type="pathway name" value="RIPK1-mediated regulated necrosis"/>
</dbReference>
<dbReference type="Reactome" id="R-HSA-5218900">
    <property type="pathway name" value="CASP8 activity is inhibited"/>
</dbReference>
<dbReference type="Reactome" id="R-HSA-6803211">
    <property type="pathway name" value="TP53 Regulates Transcription of Death Receptors and Ligands"/>
</dbReference>
<dbReference type="Reactome" id="R-HSA-69416">
    <property type="pathway name" value="Dimerization of procaspase-8"/>
</dbReference>
<dbReference type="Reactome" id="R-HSA-75158">
    <property type="pathway name" value="TRAIL signaling"/>
</dbReference>
<dbReference type="SignaLink" id="O00220"/>
<dbReference type="SIGNOR" id="O00220"/>
<dbReference type="BioGRID-ORCS" id="8797">
    <property type="hits" value="19 hits in 1163 CRISPR screens"/>
</dbReference>
<dbReference type="ChiTaRS" id="TNFRSF10A">
    <property type="organism name" value="human"/>
</dbReference>
<dbReference type="GeneWiki" id="TNFRSF10A"/>
<dbReference type="GenomeRNAi" id="8797"/>
<dbReference type="Pharos" id="O00220">
    <property type="development level" value="Tchem"/>
</dbReference>
<dbReference type="PRO" id="PR:O00220"/>
<dbReference type="Proteomes" id="UP000005640">
    <property type="component" value="Chromosome 8"/>
</dbReference>
<dbReference type="RNAct" id="O00220">
    <property type="molecule type" value="protein"/>
</dbReference>
<dbReference type="Bgee" id="ENSG00000104689">
    <property type="expression patterns" value="Expressed in buccal mucosa cell and 175 other cell types or tissues"/>
</dbReference>
<dbReference type="ExpressionAtlas" id="O00220">
    <property type="expression patterns" value="baseline and differential"/>
</dbReference>
<dbReference type="GO" id="GO:0009986">
    <property type="term" value="C:cell surface"/>
    <property type="evidence" value="ECO:0000314"/>
    <property type="project" value="UniProtKB"/>
</dbReference>
<dbReference type="GO" id="GO:0005829">
    <property type="term" value="C:cytosol"/>
    <property type="evidence" value="ECO:0000314"/>
    <property type="project" value="UniProtKB"/>
</dbReference>
<dbReference type="GO" id="GO:0005794">
    <property type="term" value="C:Golgi apparatus"/>
    <property type="evidence" value="ECO:0000314"/>
    <property type="project" value="UniProtKB"/>
</dbReference>
<dbReference type="GO" id="GO:0045121">
    <property type="term" value="C:membrane raft"/>
    <property type="evidence" value="ECO:0000314"/>
    <property type="project" value="UniProtKB"/>
</dbReference>
<dbReference type="GO" id="GO:0005886">
    <property type="term" value="C:plasma membrane"/>
    <property type="evidence" value="ECO:0000314"/>
    <property type="project" value="UniProtKB"/>
</dbReference>
<dbReference type="GO" id="GO:0044853">
    <property type="term" value="C:plasma membrane raft"/>
    <property type="evidence" value="ECO:0000314"/>
    <property type="project" value="UniProt"/>
</dbReference>
<dbReference type="GO" id="GO:0005035">
    <property type="term" value="F:death receptor activity"/>
    <property type="evidence" value="ECO:0000304"/>
    <property type="project" value="ProtInc"/>
</dbReference>
<dbReference type="GO" id="GO:0042802">
    <property type="term" value="F:identical protein binding"/>
    <property type="evidence" value="ECO:0000314"/>
    <property type="project" value="UniProtKB"/>
</dbReference>
<dbReference type="GO" id="GO:0002020">
    <property type="term" value="F:protease binding"/>
    <property type="evidence" value="ECO:0000353"/>
    <property type="project" value="UniProtKB"/>
</dbReference>
<dbReference type="GO" id="GO:0038023">
    <property type="term" value="F:signaling receptor activity"/>
    <property type="evidence" value="ECO:0000303"/>
    <property type="project" value="UniProtKB"/>
</dbReference>
<dbReference type="GO" id="GO:0045569">
    <property type="term" value="F:TRAIL binding"/>
    <property type="evidence" value="ECO:0000303"/>
    <property type="project" value="UniProtKB"/>
</dbReference>
<dbReference type="GO" id="GO:0007250">
    <property type="term" value="P:activation of NF-kappaB-inducing kinase activity"/>
    <property type="evidence" value="ECO:0000303"/>
    <property type="project" value="UniProtKB"/>
</dbReference>
<dbReference type="GO" id="GO:0006915">
    <property type="term" value="P:apoptotic process"/>
    <property type="evidence" value="ECO:0000303"/>
    <property type="project" value="UniProtKB"/>
</dbReference>
<dbReference type="GO" id="GO:0071260">
    <property type="term" value="P:cellular response to mechanical stimulus"/>
    <property type="evidence" value="ECO:0000270"/>
    <property type="project" value="UniProtKB"/>
</dbReference>
<dbReference type="GO" id="GO:0097191">
    <property type="term" value="P:extrinsic apoptotic signaling pathway"/>
    <property type="evidence" value="ECO:0000314"/>
    <property type="project" value="UniProtKB"/>
</dbReference>
<dbReference type="GO" id="GO:0008625">
    <property type="term" value="P:extrinsic apoptotic signaling pathway via death domain receptors"/>
    <property type="evidence" value="ECO:0000304"/>
    <property type="project" value="ProtInc"/>
</dbReference>
<dbReference type="GO" id="GO:0043065">
    <property type="term" value="P:positive regulation of apoptotic process"/>
    <property type="evidence" value="ECO:0000318"/>
    <property type="project" value="GO_Central"/>
</dbReference>
<dbReference type="GO" id="GO:0007165">
    <property type="term" value="P:signal transduction"/>
    <property type="evidence" value="ECO:0000304"/>
    <property type="project" value="ProtInc"/>
</dbReference>
<dbReference type="GO" id="GO:0036462">
    <property type="term" value="P:TRAIL-activated apoptotic signaling pathway"/>
    <property type="evidence" value="ECO:0000314"/>
    <property type="project" value="ParkinsonsUK-UCL"/>
</dbReference>
<dbReference type="CDD" id="cd08315">
    <property type="entry name" value="Death_TRAILR_DR4_DR5"/>
    <property type="match status" value="1"/>
</dbReference>
<dbReference type="CDD" id="cd10580">
    <property type="entry name" value="TNFRSF10"/>
    <property type="match status" value="1"/>
</dbReference>
<dbReference type="FunFam" id="1.10.533.10:FF:000043">
    <property type="entry name" value="Tumor necrosis factor receptor superfamily member 10A"/>
    <property type="match status" value="1"/>
</dbReference>
<dbReference type="FunFam" id="2.10.50.10:FF:000016">
    <property type="entry name" value="Tumor necrosis factor receptor superfamily member 10B"/>
    <property type="match status" value="1"/>
</dbReference>
<dbReference type="FunFam" id="2.10.50.10:FF:000004">
    <property type="entry name" value="Tumor necrosis factor receptor superfamily member 6"/>
    <property type="match status" value="1"/>
</dbReference>
<dbReference type="Gene3D" id="1.10.533.10">
    <property type="entry name" value="Death Domain, Fas"/>
    <property type="match status" value="1"/>
</dbReference>
<dbReference type="Gene3D" id="2.10.50.10">
    <property type="entry name" value="Tumor Necrosis Factor Receptor, subunit A, domain 2"/>
    <property type="match status" value="3"/>
</dbReference>
<dbReference type="InterPro" id="IPR011029">
    <property type="entry name" value="DEATH-like_dom_sf"/>
</dbReference>
<dbReference type="InterPro" id="IPR000488">
    <property type="entry name" value="Death_dom"/>
</dbReference>
<dbReference type="InterPro" id="IPR001368">
    <property type="entry name" value="TNFR/NGFR_Cys_rich_reg"/>
</dbReference>
<dbReference type="InterPro" id="IPR020465">
    <property type="entry name" value="TNFR_10"/>
</dbReference>
<dbReference type="InterPro" id="IPR052491">
    <property type="entry name" value="TNFRSF10"/>
</dbReference>
<dbReference type="InterPro" id="IPR034024">
    <property type="entry name" value="TNFRSF10_N"/>
</dbReference>
<dbReference type="InterPro" id="IPR034029">
    <property type="entry name" value="TNFRSF10A/B_death"/>
</dbReference>
<dbReference type="PANTHER" id="PTHR46330:SF12">
    <property type="entry name" value="TUMOR NECROSIS FACTOR RECEPTOR SUPERFAMILY MEMBER 10A"/>
    <property type="match status" value="1"/>
</dbReference>
<dbReference type="PANTHER" id="PTHR46330">
    <property type="entry name" value="TUMOR NECROSIS FACTOR RECEPTOR SUPERFAMILY MEMBER 10B"/>
    <property type="match status" value="1"/>
</dbReference>
<dbReference type="Pfam" id="PF00531">
    <property type="entry name" value="Death"/>
    <property type="match status" value="1"/>
</dbReference>
<dbReference type="Pfam" id="PF00020">
    <property type="entry name" value="TNFR_c6"/>
    <property type="match status" value="2"/>
</dbReference>
<dbReference type="PIRSF" id="PIRSF037867">
    <property type="entry name" value="CD261_antigen"/>
    <property type="match status" value="1"/>
</dbReference>
<dbReference type="PRINTS" id="PR01956">
    <property type="entry name" value="TNFACTORR10"/>
</dbReference>
<dbReference type="SMART" id="SM00005">
    <property type="entry name" value="DEATH"/>
    <property type="match status" value="1"/>
</dbReference>
<dbReference type="SMART" id="SM00208">
    <property type="entry name" value="TNFR"/>
    <property type="match status" value="2"/>
</dbReference>
<dbReference type="SUPFAM" id="SSF47986">
    <property type="entry name" value="DEATH domain"/>
    <property type="match status" value="1"/>
</dbReference>
<dbReference type="SUPFAM" id="SSF57586">
    <property type="entry name" value="TNF receptor-like"/>
    <property type="match status" value="3"/>
</dbReference>
<dbReference type="PROSITE" id="PS50017">
    <property type="entry name" value="DEATH_DOMAIN"/>
    <property type="match status" value="1"/>
</dbReference>
<dbReference type="PROSITE" id="PS00652">
    <property type="entry name" value="TNFR_NGFR_1"/>
    <property type="match status" value="2"/>
</dbReference>
<dbReference type="PROSITE" id="PS50050">
    <property type="entry name" value="TNFR_NGFR_2"/>
    <property type="match status" value="2"/>
</dbReference>
<organism>
    <name type="scientific">Homo sapiens</name>
    <name type="common">Human</name>
    <dbReference type="NCBI Taxonomy" id="9606"/>
    <lineage>
        <taxon>Eukaryota</taxon>
        <taxon>Metazoa</taxon>
        <taxon>Chordata</taxon>
        <taxon>Craniata</taxon>
        <taxon>Vertebrata</taxon>
        <taxon>Euteleostomi</taxon>
        <taxon>Mammalia</taxon>
        <taxon>Eutheria</taxon>
        <taxon>Euarchontoglires</taxon>
        <taxon>Primates</taxon>
        <taxon>Haplorrhini</taxon>
        <taxon>Catarrhini</taxon>
        <taxon>Hominidae</taxon>
        <taxon>Homo</taxon>
    </lineage>
</organism>
<reference key="1">
    <citation type="journal article" date="1997" name="Science">
        <title>The receptor for the cytotoxic ligand TRAIL.</title>
        <authorList>
            <person name="Pan G."/>
            <person name="O'Rourke K."/>
            <person name="Chinnaiyan A.M."/>
            <person name="Gentz R."/>
            <person name="Ebner R."/>
            <person name="Ni J."/>
            <person name="Dixit V.M."/>
        </authorList>
    </citation>
    <scope>NUCLEOTIDE SEQUENCE [MRNA]</scope>
    <scope>VARIANTS ARG-141; THR-209 AND LYS-441</scope>
</reference>
<reference key="2">
    <citation type="submission" date="2003-05" db="EMBL/GenBank/DDBJ databases">
        <title>Cloning of human full-length CDSs in BD Creator(TM) system donor vector.</title>
        <authorList>
            <person name="Kalnine N."/>
            <person name="Chen X."/>
            <person name="Rolfs A."/>
            <person name="Halleck A."/>
            <person name="Hines L."/>
            <person name="Eisenstein S."/>
            <person name="Koundinya M."/>
            <person name="Raphael J."/>
            <person name="Moreira D."/>
            <person name="Kelley T."/>
            <person name="LaBaer J."/>
            <person name="Lin Y."/>
            <person name="Phelan M."/>
            <person name="Farmer A."/>
        </authorList>
    </citation>
    <scope>NUCLEOTIDE SEQUENCE [LARGE SCALE MRNA]</scope>
    <scope>VARIANT LYS-441</scope>
</reference>
<reference key="3">
    <citation type="journal article" date="2004" name="Nat. Genet.">
        <title>Complete sequencing and characterization of 21,243 full-length human cDNAs.</title>
        <authorList>
            <person name="Ota T."/>
            <person name="Suzuki Y."/>
            <person name="Nishikawa T."/>
            <person name="Otsuki T."/>
            <person name="Sugiyama T."/>
            <person name="Irie R."/>
            <person name="Wakamatsu A."/>
            <person name="Hayashi K."/>
            <person name="Sato H."/>
            <person name="Nagai K."/>
            <person name="Kimura K."/>
            <person name="Makita H."/>
            <person name="Sekine M."/>
            <person name="Obayashi M."/>
            <person name="Nishi T."/>
            <person name="Shibahara T."/>
            <person name="Tanaka T."/>
            <person name="Ishii S."/>
            <person name="Yamamoto J."/>
            <person name="Saito K."/>
            <person name="Kawai Y."/>
            <person name="Isono Y."/>
            <person name="Nakamura Y."/>
            <person name="Nagahari K."/>
            <person name="Murakami K."/>
            <person name="Yasuda T."/>
            <person name="Iwayanagi T."/>
            <person name="Wagatsuma M."/>
            <person name="Shiratori A."/>
            <person name="Sudo H."/>
            <person name="Hosoiri T."/>
            <person name="Kaku Y."/>
            <person name="Kodaira H."/>
            <person name="Kondo H."/>
            <person name="Sugawara M."/>
            <person name="Takahashi M."/>
            <person name="Kanda K."/>
            <person name="Yokoi T."/>
            <person name="Furuya T."/>
            <person name="Kikkawa E."/>
            <person name="Omura Y."/>
            <person name="Abe K."/>
            <person name="Kamihara K."/>
            <person name="Katsuta N."/>
            <person name="Sato K."/>
            <person name="Tanikawa M."/>
            <person name="Yamazaki M."/>
            <person name="Ninomiya K."/>
            <person name="Ishibashi T."/>
            <person name="Yamashita H."/>
            <person name="Murakawa K."/>
            <person name="Fujimori K."/>
            <person name="Tanai H."/>
            <person name="Kimata M."/>
            <person name="Watanabe M."/>
            <person name="Hiraoka S."/>
            <person name="Chiba Y."/>
            <person name="Ishida S."/>
            <person name="Ono Y."/>
            <person name="Takiguchi S."/>
            <person name="Watanabe S."/>
            <person name="Yosida M."/>
            <person name="Hotuta T."/>
            <person name="Kusano J."/>
            <person name="Kanehori K."/>
            <person name="Takahashi-Fujii A."/>
            <person name="Hara H."/>
            <person name="Tanase T.-O."/>
            <person name="Nomura Y."/>
            <person name="Togiya S."/>
            <person name="Komai F."/>
            <person name="Hara R."/>
            <person name="Takeuchi K."/>
            <person name="Arita M."/>
            <person name="Imose N."/>
            <person name="Musashino K."/>
            <person name="Yuuki H."/>
            <person name="Oshima A."/>
            <person name="Sasaki N."/>
            <person name="Aotsuka S."/>
            <person name="Yoshikawa Y."/>
            <person name="Matsunawa H."/>
            <person name="Ichihara T."/>
            <person name="Shiohata N."/>
            <person name="Sano S."/>
            <person name="Moriya S."/>
            <person name="Momiyama H."/>
            <person name="Satoh N."/>
            <person name="Takami S."/>
            <person name="Terashima Y."/>
            <person name="Suzuki O."/>
            <person name="Nakagawa S."/>
            <person name="Senoh A."/>
            <person name="Mizoguchi H."/>
            <person name="Goto Y."/>
            <person name="Shimizu F."/>
            <person name="Wakebe H."/>
            <person name="Hishigaki H."/>
            <person name="Watanabe T."/>
            <person name="Sugiyama A."/>
            <person name="Takemoto M."/>
            <person name="Kawakami B."/>
            <person name="Yamazaki M."/>
            <person name="Watanabe K."/>
            <person name="Kumagai A."/>
            <person name="Itakura S."/>
            <person name="Fukuzumi Y."/>
            <person name="Fujimori Y."/>
            <person name="Komiyama M."/>
            <person name="Tashiro H."/>
            <person name="Tanigami A."/>
            <person name="Fujiwara T."/>
            <person name="Ono T."/>
            <person name="Yamada K."/>
            <person name="Fujii Y."/>
            <person name="Ozaki K."/>
            <person name="Hirao M."/>
            <person name="Ohmori Y."/>
            <person name="Kawabata A."/>
            <person name="Hikiji T."/>
            <person name="Kobatake N."/>
            <person name="Inagaki H."/>
            <person name="Ikema Y."/>
            <person name="Okamoto S."/>
            <person name="Okitani R."/>
            <person name="Kawakami T."/>
            <person name="Noguchi S."/>
            <person name="Itoh T."/>
            <person name="Shigeta K."/>
            <person name="Senba T."/>
            <person name="Matsumura K."/>
            <person name="Nakajima Y."/>
            <person name="Mizuno T."/>
            <person name="Morinaga M."/>
            <person name="Sasaki M."/>
            <person name="Togashi T."/>
            <person name="Oyama M."/>
            <person name="Hata H."/>
            <person name="Watanabe M."/>
            <person name="Komatsu T."/>
            <person name="Mizushima-Sugano J."/>
            <person name="Satoh T."/>
            <person name="Shirai Y."/>
            <person name="Takahashi Y."/>
            <person name="Nakagawa K."/>
            <person name="Okumura K."/>
            <person name="Nagase T."/>
            <person name="Nomura N."/>
            <person name="Kikuchi H."/>
            <person name="Masuho Y."/>
            <person name="Yamashita R."/>
            <person name="Nakai K."/>
            <person name="Yada T."/>
            <person name="Nakamura Y."/>
            <person name="Ohara O."/>
            <person name="Isogai T."/>
            <person name="Sugano S."/>
        </authorList>
    </citation>
    <scope>NUCLEOTIDE SEQUENCE [LARGE SCALE MRNA]</scope>
    <scope>VARIANTS ARG-141; THR-209 AND LYS-441</scope>
    <source>
        <tissue>Tongue</tissue>
    </source>
</reference>
<reference key="4">
    <citation type="submission" date="2006-10" db="EMBL/GenBank/DDBJ databases">
        <authorList>
            <person name="Livingston R.J."/>
            <person name="Shaffer T."/>
            <person name="McFarland I."/>
            <person name="Nguyen C.P."/>
            <person name="Stanaway I.B."/>
            <person name="Rajkumar N."/>
            <person name="Johnson E.J."/>
            <person name="da Ponte S.H."/>
            <person name="Willa H."/>
            <person name="Ahearn M.O."/>
            <person name="Bertucci C."/>
            <person name="Acklestad J."/>
            <person name="Carroll A."/>
            <person name="Swanson J."/>
            <person name="Gildersleeve H.I."/>
            <person name="Nickerson D.A."/>
        </authorList>
    </citation>
    <scope>NUCLEOTIDE SEQUENCE [GENOMIC DNA]</scope>
    <scope>VARIANT LYS-441</scope>
</reference>
<reference key="5">
    <citation type="journal article" date="2006" name="Nature">
        <title>DNA sequence and analysis of human chromosome 8.</title>
        <authorList>
            <person name="Nusbaum C."/>
            <person name="Mikkelsen T.S."/>
            <person name="Zody M.C."/>
            <person name="Asakawa S."/>
            <person name="Taudien S."/>
            <person name="Garber M."/>
            <person name="Kodira C.D."/>
            <person name="Schueler M.G."/>
            <person name="Shimizu A."/>
            <person name="Whittaker C.A."/>
            <person name="Chang J.L."/>
            <person name="Cuomo C.A."/>
            <person name="Dewar K."/>
            <person name="FitzGerald M.G."/>
            <person name="Yang X."/>
            <person name="Allen N.R."/>
            <person name="Anderson S."/>
            <person name="Asakawa T."/>
            <person name="Blechschmidt K."/>
            <person name="Bloom T."/>
            <person name="Borowsky M.L."/>
            <person name="Butler J."/>
            <person name="Cook A."/>
            <person name="Corum B."/>
            <person name="DeArellano K."/>
            <person name="DeCaprio D."/>
            <person name="Dooley K.T."/>
            <person name="Dorris L. III"/>
            <person name="Engels R."/>
            <person name="Gloeckner G."/>
            <person name="Hafez N."/>
            <person name="Hagopian D.S."/>
            <person name="Hall J.L."/>
            <person name="Ishikawa S.K."/>
            <person name="Jaffe D.B."/>
            <person name="Kamat A."/>
            <person name="Kudoh J."/>
            <person name="Lehmann R."/>
            <person name="Lokitsang T."/>
            <person name="Macdonald P."/>
            <person name="Major J.E."/>
            <person name="Matthews C.D."/>
            <person name="Mauceli E."/>
            <person name="Menzel U."/>
            <person name="Mihalev A.H."/>
            <person name="Minoshima S."/>
            <person name="Murayama Y."/>
            <person name="Naylor J.W."/>
            <person name="Nicol R."/>
            <person name="Nguyen C."/>
            <person name="O'Leary S.B."/>
            <person name="O'Neill K."/>
            <person name="Parker S.C.J."/>
            <person name="Polley A."/>
            <person name="Raymond C.K."/>
            <person name="Reichwald K."/>
            <person name="Rodriguez J."/>
            <person name="Sasaki T."/>
            <person name="Schilhabel M."/>
            <person name="Siddiqui R."/>
            <person name="Smith C.L."/>
            <person name="Sneddon T.P."/>
            <person name="Talamas J.A."/>
            <person name="Tenzin P."/>
            <person name="Topham K."/>
            <person name="Venkataraman V."/>
            <person name="Wen G."/>
            <person name="Yamazaki S."/>
            <person name="Young S.K."/>
            <person name="Zeng Q."/>
            <person name="Zimmer A.R."/>
            <person name="Rosenthal A."/>
            <person name="Birren B.W."/>
            <person name="Platzer M."/>
            <person name="Shimizu N."/>
            <person name="Lander E.S."/>
        </authorList>
    </citation>
    <scope>NUCLEOTIDE SEQUENCE [LARGE SCALE GENOMIC DNA]</scope>
</reference>
<reference key="6">
    <citation type="journal article" date="2004" name="Genome Res.">
        <title>The status, quality, and expansion of the NIH full-length cDNA project: the Mammalian Gene Collection (MGC).</title>
        <authorList>
            <consortium name="The MGC Project Team"/>
        </authorList>
    </citation>
    <scope>NUCLEOTIDE SEQUENCE [LARGE SCALE MRNA]</scope>
    <scope>VARIANT LYS-441</scope>
    <source>
        <tissue>Ovary</tissue>
    </source>
</reference>
<reference key="7">
    <citation type="journal article" date="1997" name="Immunity">
        <title>Death receptor 5, a new member of the TNFR family, and DR4 induce FADD-dependent apoptosis and activate the NF-kappaB pathway.</title>
        <authorList>
            <person name="Chaudhary P.M."/>
            <person name="Eby M."/>
            <person name="Jasmin A."/>
            <person name="Bookwalter A."/>
            <person name="Murray J."/>
            <person name="Hood L."/>
        </authorList>
    </citation>
    <scope>FUNCTION</scope>
</reference>
<reference key="8">
    <citation type="journal article" date="2006" name="Cell">
        <title>Global, in vivo, and site-specific phosphorylation dynamics in signaling networks.</title>
        <authorList>
            <person name="Olsen J.V."/>
            <person name="Blagoev B."/>
            <person name="Gnad F."/>
            <person name="Macek B."/>
            <person name="Kumar C."/>
            <person name="Mortensen P."/>
            <person name="Mann M."/>
        </authorList>
    </citation>
    <scope>PHOSPHORYLATION [LARGE SCALE ANALYSIS] AT SER-466</scope>
    <scope>IDENTIFICATION BY MASS SPECTROMETRY [LARGE SCALE ANALYSIS]</scope>
    <source>
        <tissue>Cervix carcinoma</tissue>
    </source>
</reference>
<reference key="9">
    <citation type="journal article" date="2008" name="Apoptosis">
        <title>Arf and Rho GAP adapter protein ARAP1 participates in the mobilization of TRAIL-R1/DR4 to the plasma membrane.</title>
        <authorList>
            <person name="Simova S."/>
            <person name="Klima M."/>
            <person name="Cermak L."/>
            <person name="Sourkova V."/>
            <person name="Andera L."/>
        </authorList>
    </citation>
    <scope>INTERACTION WITH ARAP1</scope>
</reference>
<reference key="10">
    <citation type="journal article" date="2008" name="Cell Death Differ.">
        <title>Identification of an antiapoptotic protein complex at death receptors.</title>
        <authorList>
            <person name="Sun M."/>
            <person name="Song L."/>
            <person name="Li Y."/>
            <person name="Zhou T."/>
            <person name="Jope R.S."/>
        </authorList>
    </citation>
    <scope>INTERACTION WITH DDX3X; GSK3B AND BIRC2</scope>
</reference>
<reference key="11">
    <citation type="journal article" date="2009" name="Biochem. J.">
        <title>Palmitoylation of the TRAIL receptor DR4 confers an efficient TRAIL-induced cell death signalling.</title>
        <authorList>
            <person name="Rossin A."/>
            <person name="Derouet M."/>
            <person name="Abdel-Sater F."/>
            <person name="Hueber A.O."/>
        </authorList>
    </citation>
    <scope>FUNCTION</scope>
    <scope>SUBUNIT</scope>
    <scope>SUBCELLULAR LOCATION</scope>
    <scope>PALMITOYLATION</scope>
    <scope>MUTAGENESIS OF CYS-261; CYS-262; CYS-263; CYS-268; CYS-274 AND CYS-279</scope>
</reference>
<reference key="12">
    <citation type="journal article" date="2010" name="Sci. Signal.">
        <title>Quantitative phosphoproteomics reveals widespread full phosphorylation site occupancy during mitosis.</title>
        <authorList>
            <person name="Olsen J.V."/>
            <person name="Vermeulen M."/>
            <person name="Santamaria A."/>
            <person name="Kumar C."/>
            <person name="Miller M.L."/>
            <person name="Jensen L.J."/>
            <person name="Gnad F."/>
            <person name="Cox J."/>
            <person name="Jensen T.S."/>
            <person name="Nigg E.A."/>
            <person name="Brunak S."/>
            <person name="Mann M."/>
        </authorList>
    </citation>
    <scope>PHOSPHORYLATION [LARGE SCALE ANALYSIS] AT SER-463 AND SER-466</scope>
    <scope>IDENTIFICATION BY MASS SPECTROMETRY [LARGE SCALE ANALYSIS]</scope>
    <source>
        <tissue>Cervix carcinoma</tissue>
    </source>
</reference>
<reference key="13">
    <citation type="journal article" date="2012" name="Cell Death Differ.">
        <title>Regulation in the targeting of TRAIL receptor 1 to cell surface via GODZ for TRAIL sensitivity in tumor cells.</title>
        <authorList>
            <person name="Oh Y."/>
            <person name="Jeon Y.J."/>
            <person name="Hong G.S."/>
            <person name="Kim I."/>
            <person name="Woo H.N."/>
            <person name="Jung Y.K."/>
        </authorList>
    </citation>
    <scope>SUBCELLULAR LOCATION</scope>
    <scope>PALMITOYLATION</scope>
</reference>
<reference key="14">
    <citation type="journal article" date="2013" name="Cell Host Microbe">
        <title>Human cytomegalovirus glycoprotein UL141 targets the TRAIL death receptors to thwart host innate antiviral defenses.</title>
        <authorList>
            <person name="Smith W."/>
            <person name="Tomasec P."/>
            <person name="Aicheler R."/>
            <person name="Loewendorf A."/>
            <person name="Nemcovicova I."/>
            <person name="Wang E.C."/>
            <person name="Stanton R.J."/>
            <person name="Macauley M."/>
            <person name="Norris P."/>
            <person name="Willen L."/>
            <person name="Ruckova E."/>
            <person name="Nomoto A."/>
            <person name="Schneider P."/>
            <person name="Hahn G."/>
            <person name="Zajonc D.M."/>
            <person name="Ware C.F."/>
            <person name="Wilkinson G.W."/>
            <person name="Benedict C.A."/>
        </authorList>
    </citation>
    <scope>INTERACTION WITH HUMAN CYTOMEGALOVIRUS PROTEIN UL141 (MICROBIAL INFECTION)</scope>
</reference>
<reference key="15">
    <citation type="journal article" date="2013" name="J. Proteome Res.">
        <title>Toward a comprehensive characterization of a human cancer cell phosphoproteome.</title>
        <authorList>
            <person name="Zhou H."/>
            <person name="Di Palma S."/>
            <person name="Preisinger C."/>
            <person name="Peng M."/>
            <person name="Polat A.N."/>
            <person name="Heck A.J."/>
            <person name="Mohammed S."/>
        </authorList>
    </citation>
    <scope>PHOSPHORYLATION [LARGE SCALE ANALYSIS] AT SER-424</scope>
    <scope>IDENTIFICATION BY MASS SPECTROMETRY [LARGE SCALE ANALYSIS]</scope>
    <source>
        <tissue>Erythroleukemia</tissue>
    </source>
</reference>
<reference key="16">
    <citation type="journal article" date="2014" name="Mol. Cell. Proteomics">
        <title>Immunoaffinity enrichment and mass spectrometry analysis of protein methylation.</title>
        <authorList>
            <person name="Guo A."/>
            <person name="Gu H."/>
            <person name="Zhou J."/>
            <person name="Mulhern D."/>
            <person name="Wang Y."/>
            <person name="Lee K.A."/>
            <person name="Yang V."/>
            <person name="Aguiar M."/>
            <person name="Kornhauser J."/>
            <person name="Jia X."/>
            <person name="Ren J."/>
            <person name="Beausoleil S.A."/>
            <person name="Silva J.C."/>
            <person name="Vemulapalli V."/>
            <person name="Bedford M.T."/>
            <person name="Comb M.J."/>
        </authorList>
    </citation>
    <scope>METHYLATION [LARGE SCALE ANALYSIS] AT ARG-52</scope>
    <scope>IDENTIFICATION BY MASS SPECTROMETRY [LARGE SCALE ANALYSIS]</scope>
    <source>
        <tissue>Colon carcinoma</tissue>
    </source>
</reference>
<reference key="17">
    <citation type="journal article" date="2024" name="J. Biomed. Sci.">
        <title>Association of TRAIL receptor with phosphatase SHP-1 enables repressing T cell receptor signaling and T cell activation through inactivating Lck.</title>
        <authorList>
            <person name="Chyuan I.T."/>
            <person name="Liao H.J."/>
            <person name="Tan T.H."/>
            <person name="Chuang H.C."/>
            <person name="Chu Y.C."/>
            <person name="Pan M.H."/>
            <person name="Wu C.S."/>
            <person name="Chu C.L."/>
            <person name="Sheu B.C."/>
            <person name="Hsu P.N."/>
        </authorList>
    </citation>
    <scope>FUNCTION</scope>
    <scope>INTERACTION WITH PTPN6</scope>
</reference>
<reference evidence="20" key="18">
    <citation type="journal article" date="2015" name="Acta Crystallogr. F">
        <title>The structure of the death receptor 4-TNF-related apoptosis-inducing ligand (DR4-TRAIL) complex.</title>
        <authorList>
            <person name="Ramamurthy V."/>
            <person name="Yamniuk A.P."/>
            <person name="Lawrence E.J."/>
            <person name="Yong W."/>
            <person name="Schneeweis L.A."/>
            <person name="Cheng L."/>
            <person name="Murdock M."/>
            <person name="Corbett M.J."/>
            <person name="Doyle M.L."/>
            <person name="Sheriff S."/>
        </authorList>
    </citation>
    <scope>X-RAY CRYSTALLOGRAPHY (3.00 ANGSTROMS) OF 125-232 IN COMPLEX WITH TNFSF10</scope>
    <scope>SUBUNIT</scope>
    <scope>FUNCTION</scope>
    <scope>DISULFIDE BONDS</scope>
</reference>
<accession>O00220</accession>
<accession>A8K5I4</accession>
<accession>Q53Y72</accession>
<accession>Q96E62</accession>
<proteinExistence type="evidence at protein level"/>
<keyword id="KW-0002">3D-structure</keyword>
<keyword id="KW-0053">Apoptosis</keyword>
<keyword id="KW-1003">Cell membrane</keyword>
<keyword id="KW-0963">Cytoplasm</keyword>
<keyword id="KW-1015">Disulfide bond</keyword>
<keyword id="KW-0325">Glycoprotein</keyword>
<keyword id="KW-0472">Membrane</keyword>
<keyword id="KW-0488">Methylation</keyword>
<keyword id="KW-0597">Phosphoprotein</keyword>
<keyword id="KW-1267">Proteomics identification</keyword>
<keyword id="KW-0675">Receptor</keyword>
<keyword id="KW-1185">Reference proteome</keyword>
<keyword id="KW-0677">Repeat</keyword>
<keyword id="KW-0732">Signal</keyword>
<keyword id="KW-0812">Transmembrane</keyword>
<keyword id="KW-1133">Transmembrane helix</keyword>